<evidence type="ECO:0000255" key="1">
    <source>
        <dbReference type="HAMAP-Rule" id="MF_01385"/>
    </source>
</evidence>
<keyword id="KW-0143">Chaperone</keyword>
<keyword id="KW-0963">Cytoplasm</keyword>
<keyword id="KW-0996">Nickel insertion</keyword>
<keyword id="KW-1185">Reference proteome</keyword>
<accession>Q0BQ38</accession>
<reference key="1">
    <citation type="journal article" date="2007" name="J. Bacteriol.">
        <title>Genome sequence analysis of the emerging human pathogenic acetic acid bacterium Granulibacter bethesdensis.</title>
        <authorList>
            <person name="Greenberg D.E."/>
            <person name="Porcella S.F."/>
            <person name="Zelazny A.M."/>
            <person name="Virtaneva K."/>
            <person name="Sturdevant D.E."/>
            <person name="Kupko J.J. III"/>
            <person name="Barbian K.D."/>
            <person name="Babar A."/>
            <person name="Dorward D.W."/>
            <person name="Holland S.M."/>
        </authorList>
    </citation>
    <scope>NUCLEOTIDE SEQUENCE [LARGE SCALE GENOMIC DNA]</scope>
    <source>
        <strain>ATCC BAA-1260 / CGDNIH1</strain>
    </source>
</reference>
<protein>
    <recommendedName>
        <fullName evidence="1">Urease accessory protein UreF</fullName>
    </recommendedName>
</protein>
<gene>
    <name evidence="1" type="primary">ureF</name>
    <name type="ordered locus">GbCGDNIH1_2166</name>
</gene>
<dbReference type="EMBL" id="CP000394">
    <property type="protein sequence ID" value="ABI63064.1"/>
    <property type="molecule type" value="Genomic_DNA"/>
</dbReference>
<dbReference type="SMR" id="Q0BQ38"/>
<dbReference type="STRING" id="391165.GbCGDNIH1_2166"/>
<dbReference type="KEGG" id="gbe:GbCGDNIH1_2166"/>
<dbReference type="eggNOG" id="COG0830">
    <property type="taxonomic scope" value="Bacteria"/>
</dbReference>
<dbReference type="HOGENOM" id="CLU_049215_2_0_5"/>
<dbReference type="OrthoDB" id="9798772at2"/>
<dbReference type="Proteomes" id="UP000001963">
    <property type="component" value="Chromosome"/>
</dbReference>
<dbReference type="GO" id="GO:0005737">
    <property type="term" value="C:cytoplasm"/>
    <property type="evidence" value="ECO:0007669"/>
    <property type="project" value="UniProtKB-SubCell"/>
</dbReference>
<dbReference type="GO" id="GO:0016151">
    <property type="term" value="F:nickel cation binding"/>
    <property type="evidence" value="ECO:0007669"/>
    <property type="project" value="UniProtKB-UniRule"/>
</dbReference>
<dbReference type="Gene3D" id="1.10.4190.10">
    <property type="entry name" value="Urease accessory protein UreF"/>
    <property type="match status" value="1"/>
</dbReference>
<dbReference type="HAMAP" id="MF_01385">
    <property type="entry name" value="UreF"/>
    <property type="match status" value="1"/>
</dbReference>
<dbReference type="InterPro" id="IPR002639">
    <property type="entry name" value="UreF"/>
</dbReference>
<dbReference type="InterPro" id="IPR038277">
    <property type="entry name" value="UreF_sf"/>
</dbReference>
<dbReference type="PANTHER" id="PTHR33620">
    <property type="entry name" value="UREASE ACCESSORY PROTEIN F"/>
    <property type="match status" value="1"/>
</dbReference>
<dbReference type="PANTHER" id="PTHR33620:SF1">
    <property type="entry name" value="UREASE ACCESSORY PROTEIN F"/>
    <property type="match status" value="1"/>
</dbReference>
<dbReference type="Pfam" id="PF01730">
    <property type="entry name" value="UreF"/>
    <property type="match status" value="1"/>
</dbReference>
<dbReference type="PIRSF" id="PIRSF009467">
    <property type="entry name" value="Ureas_acces_UreF"/>
    <property type="match status" value="1"/>
</dbReference>
<proteinExistence type="inferred from homology"/>
<comment type="function">
    <text evidence="1">Required for maturation of urease via the functional incorporation of the urease nickel metallocenter.</text>
</comment>
<comment type="subunit">
    <text evidence="1">UreD, UreF and UreG form a complex that acts as a GTP-hydrolysis-dependent molecular chaperone, activating the urease apoprotein by helping to assemble the nickel containing metallocenter of UreC. The UreE protein probably delivers the nickel.</text>
</comment>
<comment type="subcellular location">
    <subcellularLocation>
        <location evidence="1">Cytoplasm</location>
    </subcellularLocation>
</comment>
<comment type="similarity">
    <text evidence="1">Belongs to the UreF family.</text>
</comment>
<sequence length="236" mass="25240">MIDDFAPTSSTGDAALYRLLSWLSPAYPVGAYTYSHGLETAVEDGLVHHRQSLADYVATVLHDGAAAIDGPLLAASWRAAQAEDHARLDELAVLGAAWRSSAETALETSAQGRAFCDVTQAAWPDSRFAAFCARHDESIVHPVAFGVASCWQGIPLRAALFGYLSAFAANLVSAGVRLIPLGQTDGQRAQAALLDDLQRATDHGLNTALEDAGSAVPMLDLFSIRHETQYTRLFRS</sequence>
<organism>
    <name type="scientific">Granulibacter bethesdensis (strain ATCC BAA-1260 / CGDNIH1)</name>
    <dbReference type="NCBI Taxonomy" id="391165"/>
    <lineage>
        <taxon>Bacteria</taxon>
        <taxon>Pseudomonadati</taxon>
        <taxon>Pseudomonadota</taxon>
        <taxon>Alphaproteobacteria</taxon>
        <taxon>Acetobacterales</taxon>
        <taxon>Acetobacteraceae</taxon>
        <taxon>Granulibacter</taxon>
    </lineage>
</organism>
<feature type="chain" id="PRO_0000344124" description="Urease accessory protein UreF">
    <location>
        <begin position="1"/>
        <end position="236"/>
    </location>
</feature>
<name>UREF_GRABC</name>